<feature type="chain" id="PRO_0000395198" description="2-hydroxyisoflavanone synthase">
    <location>
        <begin position="1"/>
        <end position="521"/>
    </location>
</feature>
<feature type="transmembrane region" description="Helical" evidence="3">
    <location>
        <begin position="2"/>
        <end position="23"/>
    </location>
</feature>
<feature type="binding site" description="axial binding residue" evidence="1">
    <location>
        <position position="449"/>
    </location>
    <ligand>
        <name>heme</name>
        <dbReference type="ChEBI" id="CHEBI:30413"/>
    </ligand>
    <ligandPart>
        <name>Fe</name>
        <dbReference type="ChEBI" id="CHEBI:18248"/>
    </ligandPart>
</feature>
<keyword id="KW-0256">Endoplasmic reticulum</keyword>
<keyword id="KW-0349">Heme</keyword>
<keyword id="KW-0408">Iron</keyword>
<keyword id="KW-0472">Membrane</keyword>
<keyword id="KW-0479">Metal-binding</keyword>
<keyword id="KW-0492">Microsome</keyword>
<keyword id="KW-0503">Monooxygenase</keyword>
<keyword id="KW-0521">NADP</keyword>
<keyword id="KW-0560">Oxidoreductase</keyword>
<keyword id="KW-1185">Reference proteome</keyword>
<keyword id="KW-0812">Transmembrane</keyword>
<keyword id="KW-1133">Transmembrane helix</keyword>
<gene>
    <name type="primary">IFS2</name>
    <name type="synonym">CYP93C1v2</name>
</gene>
<protein>
    <recommendedName>
        <fullName>2-hydroxyisoflavanone synthase</fullName>
        <ecNumber evidence="2">1.14.14.87</ecNumber>
    </recommendedName>
    <alternativeName>
        <fullName>Cytochrome P450 93C1v2</fullName>
    </alternativeName>
    <alternativeName>
        <fullName>Isoflavone synthase 2</fullName>
    </alternativeName>
</protein>
<name>C93C1_SOYBN</name>
<sequence length="521" mass="58869">MLLELALGLLVLALFLHLRPTPTAKSKALRHLPNPPSPKPRLPFIGHLHLLKDKLLHYALIDLSKKHGPLFSLYFGSMPTVVASTPELFKLFLQTHEATSFNTRFQTSAIRRLTYDSSVAMVPFGPYWKFVRKLIMNDLLNATTVNKLRPLRTQQIRKFLRVMAQGAEAQKPLDLTEELLKWTNSTISMMMLGEAEEIRDIAREVLKIFGEYSLTDFIWPLKHLKVGKYEKRIDDILNKFDPVVERVIKKRREIVRRRKNGEVVEGEVSGVFLDTLLEFAEDETMEIKITKDHIKGLVVDFFSAGTDSTAVATEWALAELINNPKVLEKAREEVYSVVGKDRLVDEVDTQNLPYIRAIVKETFRMHPPLPVVKRKCTEECEINGYVIPEGALILFNVWQVGRDPKYWDRPSEFRPERFLETGAEGEAGPLDLRGQHFQLLPFGSGRRMCPGVNLATSGMATLLASLIQCFDLQVLGPQGQILKGGDAKVSMEERAGLTVPRAHSLVCVPLARIGVASKLLS</sequence>
<evidence type="ECO:0000250" key="1"/>
<evidence type="ECO:0000250" key="2">
    <source>
        <dbReference type="UniProtKB" id="Q9SXS3"/>
    </source>
</evidence>
<evidence type="ECO:0000255" key="3"/>
<evidence type="ECO:0000269" key="4">
    <source>
    </source>
</evidence>
<evidence type="ECO:0000305" key="5"/>
<organism>
    <name type="scientific">Glycine max</name>
    <name type="common">Soybean</name>
    <name type="synonym">Glycine hispida</name>
    <dbReference type="NCBI Taxonomy" id="3847"/>
    <lineage>
        <taxon>Eukaryota</taxon>
        <taxon>Viridiplantae</taxon>
        <taxon>Streptophyta</taxon>
        <taxon>Embryophyta</taxon>
        <taxon>Tracheophyta</taxon>
        <taxon>Spermatophyta</taxon>
        <taxon>Magnoliopsida</taxon>
        <taxon>eudicotyledons</taxon>
        <taxon>Gunneridae</taxon>
        <taxon>Pentapetalae</taxon>
        <taxon>rosids</taxon>
        <taxon>fabids</taxon>
        <taxon>Fabales</taxon>
        <taxon>Fabaceae</taxon>
        <taxon>Papilionoideae</taxon>
        <taxon>50 kb inversion clade</taxon>
        <taxon>NPAAA clade</taxon>
        <taxon>indigoferoid/millettioid clade</taxon>
        <taxon>Phaseoleae</taxon>
        <taxon>Glycine</taxon>
        <taxon>Glycine subgen. Soja</taxon>
    </lineage>
</organism>
<comment type="function">
    <text evidence="4">Involved in isoflavonoid biosynthesis. Converts liquiritigenin to 2-hydroxyisoflavanone which spontaneously dehydrates to daidzein.</text>
</comment>
<comment type="catalytic activity">
    <reaction evidence="2">
        <text>(2S)-liquiritigenin + reduced [NADPH--hemoprotein reductase] + O2 = (2R,3S)-2,4',7-trihydroxyisoflavanone + oxidized [NADPH--hemoprotein reductase] + H2O + H(+)</text>
        <dbReference type="Rhea" id="RHEA:31723"/>
        <dbReference type="Rhea" id="RHEA-COMP:11964"/>
        <dbReference type="Rhea" id="RHEA-COMP:11965"/>
        <dbReference type="ChEBI" id="CHEBI:15377"/>
        <dbReference type="ChEBI" id="CHEBI:15378"/>
        <dbReference type="ChEBI" id="CHEBI:15379"/>
        <dbReference type="ChEBI" id="CHEBI:28777"/>
        <dbReference type="ChEBI" id="CHEBI:57618"/>
        <dbReference type="ChEBI" id="CHEBI:58210"/>
        <dbReference type="ChEBI" id="CHEBI:63325"/>
        <dbReference type="EC" id="1.14.14.87"/>
    </reaction>
</comment>
<comment type="catalytic activity">
    <reaction evidence="2">
        <text>(2S)-naringenin + reduced [NADPH--hemoprotein reductase] + O2 = 2-hydroxy-2,3-dihydrogenistein + oxidized [NADPH--hemoprotein reductase] + H2O + H(+)</text>
        <dbReference type="Rhea" id="RHEA:35487"/>
        <dbReference type="Rhea" id="RHEA-COMP:11964"/>
        <dbReference type="Rhea" id="RHEA-COMP:11965"/>
        <dbReference type="ChEBI" id="CHEBI:15377"/>
        <dbReference type="ChEBI" id="CHEBI:15378"/>
        <dbReference type="ChEBI" id="CHEBI:15379"/>
        <dbReference type="ChEBI" id="CHEBI:17846"/>
        <dbReference type="ChEBI" id="CHEBI:31080"/>
        <dbReference type="ChEBI" id="CHEBI:57618"/>
        <dbReference type="ChEBI" id="CHEBI:58210"/>
        <dbReference type="EC" id="1.14.14.87"/>
    </reaction>
</comment>
<comment type="cofactor">
    <cofactor evidence="1">
        <name>heme</name>
        <dbReference type="ChEBI" id="CHEBI:30413"/>
    </cofactor>
</comment>
<comment type="subcellular location">
    <subcellularLocation>
        <location evidence="5">Endoplasmic reticulum membrane</location>
        <topology evidence="5">Single-pass membrane protein</topology>
    </subcellularLocation>
    <subcellularLocation>
        <location evidence="5">Microsome membrane</location>
        <topology evidence="5">Single-pass membrane protein</topology>
    </subcellularLocation>
</comment>
<comment type="similarity">
    <text evidence="5">Belongs to the cytochrome P450 family.</text>
</comment>
<dbReference type="EC" id="1.14.14.87" evidence="2"/>
<dbReference type="EMBL" id="AF135484">
    <property type="protein sequence ID" value="AAD38929.1"/>
    <property type="molecule type" value="mRNA"/>
</dbReference>
<dbReference type="RefSeq" id="NP_001238515.2">
    <property type="nucleotide sequence ID" value="NM_001251586.2"/>
</dbReference>
<dbReference type="SMR" id="Q9SWR5"/>
<dbReference type="STRING" id="3847.Q9SWR5"/>
<dbReference type="PaxDb" id="3847-GLYMA13G24200.1"/>
<dbReference type="EnsemblPlants" id="KRH20368">
    <property type="protein sequence ID" value="KRH20368"/>
    <property type="gene ID" value="GLYMA_13G173500"/>
</dbReference>
<dbReference type="GeneID" id="606705"/>
<dbReference type="Gramene" id="KRH20368">
    <property type="protein sequence ID" value="KRH20368"/>
    <property type="gene ID" value="GLYMA_13G173500"/>
</dbReference>
<dbReference type="KEGG" id="gmx:606705"/>
<dbReference type="eggNOG" id="KOG0156">
    <property type="taxonomic scope" value="Eukaryota"/>
</dbReference>
<dbReference type="HOGENOM" id="CLU_001570_4_0_1"/>
<dbReference type="InParanoid" id="Q9SWR5"/>
<dbReference type="OrthoDB" id="1103324at2759"/>
<dbReference type="BRENDA" id="1.14.14.87">
    <property type="organism ID" value="2483"/>
</dbReference>
<dbReference type="Proteomes" id="UP000008827">
    <property type="component" value="Chromosome 13"/>
</dbReference>
<dbReference type="GO" id="GO:0005789">
    <property type="term" value="C:endoplasmic reticulum membrane"/>
    <property type="evidence" value="ECO:0007669"/>
    <property type="project" value="UniProtKB-SubCell"/>
</dbReference>
<dbReference type="GO" id="GO:0043231">
    <property type="term" value="C:intracellular membrane-bounded organelle"/>
    <property type="evidence" value="ECO:0000314"/>
    <property type="project" value="UniProtKB"/>
</dbReference>
<dbReference type="GO" id="GO:0016020">
    <property type="term" value="C:membrane"/>
    <property type="evidence" value="ECO:0000318"/>
    <property type="project" value="GO_Central"/>
</dbReference>
<dbReference type="GO" id="GO:0033770">
    <property type="term" value="F:2-hydroxyisoflavanone synthase activity"/>
    <property type="evidence" value="ECO:0007669"/>
    <property type="project" value="UniProtKB-EC"/>
</dbReference>
<dbReference type="GO" id="GO:0020037">
    <property type="term" value="F:heme binding"/>
    <property type="evidence" value="ECO:0007669"/>
    <property type="project" value="InterPro"/>
</dbReference>
<dbReference type="GO" id="GO:0005506">
    <property type="term" value="F:iron ion binding"/>
    <property type="evidence" value="ECO:0007669"/>
    <property type="project" value="InterPro"/>
</dbReference>
<dbReference type="GO" id="GO:0016709">
    <property type="term" value="F:oxidoreductase activity, acting on paired donors, with incorporation or reduction of molecular oxygen, NAD(P)H as one donor, and incorporation of one atom of oxygen"/>
    <property type="evidence" value="ECO:0000250"/>
    <property type="project" value="UniProtKB"/>
</dbReference>
<dbReference type="GO" id="GO:0009717">
    <property type="term" value="P:isoflavonoid biosynthetic process"/>
    <property type="evidence" value="ECO:0000314"/>
    <property type="project" value="UniProtKB"/>
</dbReference>
<dbReference type="CDD" id="cd20655">
    <property type="entry name" value="CYP93"/>
    <property type="match status" value="1"/>
</dbReference>
<dbReference type="FunFam" id="1.10.630.10:FF:000019">
    <property type="entry name" value="Cytochrome P450 family protein"/>
    <property type="match status" value="1"/>
</dbReference>
<dbReference type="Gene3D" id="1.10.630.10">
    <property type="entry name" value="Cytochrome P450"/>
    <property type="match status" value="1"/>
</dbReference>
<dbReference type="InterPro" id="IPR001128">
    <property type="entry name" value="Cyt_P450"/>
</dbReference>
<dbReference type="InterPro" id="IPR017972">
    <property type="entry name" value="Cyt_P450_CS"/>
</dbReference>
<dbReference type="InterPro" id="IPR002401">
    <property type="entry name" value="Cyt_P450_E_grp-I"/>
</dbReference>
<dbReference type="InterPro" id="IPR036396">
    <property type="entry name" value="Cyt_P450_sf"/>
</dbReference>
<dbReference type="PANTHER" id="PTHR47944:SF17">
    <property type="entry name" value="3,9-DIHYDROXYPTEROCARPAN 6A-MONOOXYGENASE"/>
    <property type="match status" value="1"/>
</dbReference>
<dbReference type="PANTHER" id="PTHR47944">
    <property type="entry name" value="CYTOCHROME P450 98A9"/>
    <property type="match status" value="1"/>
</dbReference>
<dbReference type="Pfam" id="PF00067">
    <property type="entry name" value="p450"/>
    <property type="match status" value="1"/>
</dbReference>
<dbReference type="PRINTS" id="PR00463">
    <property type="entry name" value="EP450I"/>
</dbReference>
<dbReference type="PRINTS" id="PR00385">
    <property type="entry name" value="P450"/>
</dbReference>
<dbReference type="SUPFAM" id="SSF48264">
    <property type="entry name" value="Cytochrome P450"/>
    <property type="match status" value="1"/>
</dbReference>
<dbReference type="PROSITE" id="PS00086">
    <property type="entry name" value="CYTOCHROME_P450"/>
    <property type="match status" value="1"/>
</dbReference>
<proteinExistence type="evidence at transcript level"/>
<reference key="1">
    <citation type="journal article" date="1999" name="Arch. Biochem. Biophys.">
        <title>Molecular characterization of the enzyme catalyzing the aryl migration reaction of isoflavonoid biosynthesis in soybean.</title>
        <authorList>
            <person name="Steele C.L."/>
            <person name="Gijzen M."/>
            <person name="Qutob D."/>
            <person name="Dixon R.A."/>
        </authorList>
    </citation>
    <scope>NUCLEOTIDE SEQUENCE [MRNA]</scope>
    <scope>FUNCTION</scope>
</reference>
<accession>Q9SWR5</accession>